<accession>Q99PA5</accession>
<organism>
    <name type="scientific">Mus musculus</name>
    <name type="common">Mouse</name>
    <dbReference type="NCBI Taxonomy" id="10090"/>
    <lineage>
        <taxon>Eukaryota</taxon>
        <taxon>Metazoa</taxon>
        <taxon>Chordata</taxon>
        <taxon>Craniata</taxon>
        <taxon>Vertebrata</taxon>
        <taxon>Euteleostomi</taxon>
        <taxon>Mammalia</taxon>
        <taxon>Eutheria</taxon>
        <taxon>Euarchontoglires</taxon>
        <taxon>Glires</taxon>
        <taxon>Rodentia</taxon>
        <taxon>Myomorpha</taxon>
        <taxon>Muroidea</taxon>
        <taxon>Muridae</taxon>
        <taxon>Murinae</taxon>
        <taxon>Mus</taxon>
        <taxon>Mus</taxon>
    </lineage>
</organism>
<protein>
    <recommendedName>
        <fullName>Protein NKG7</fullName>
    </recommendedName>
    <alternativeName>
        <fullName>Natural killer cell protein 7</fullName>
    </alternativeName>
</protein>
<gene>
    <name type="primary">Nkg7</name>
</gene>
<proteinExistence type="evidence at transcript level"/>
<name>NKG7_MOUSE</name>
<comment type="function">
    <text evidence="3 4">Regulates cytotoxic granule exocytosis in effector lymphocytes, thus acting as a critical mediator of inflammation in a broad range of infectious and non-infectious diseases (PubMed:32839608). Essential for cytotoxic degranulation of natural killer (NK) cells and CD8(+) T-cells and for the activation of CD4(+) T-cells following infection (PubMed:32839608). Plays a critical role in CD8(+) T-cell and NK cell-mediated cytolysis of target cells and contributes to the cytolytic activity via the perforin/granzyme pathway by enhancing exocytosis of LAMP1-carrying lytic granules (PubMed:32839608, PubMed:33911019). Contributes to NK cell-mediated control of cancer metastasis (PubMed:32839608).</text>
</comment>
<comment type="subcellular location">
    <subcellularLocation>
        <location evidence="1">Cell membrane</location>
        <topology evidence="2">Multi-pass membrane protein</topology>
    </subcellularLocation>
    <subcellularLocation>
        <location evidence="6">Cytolytic granule membrane</location>
        <topology evidence="2">Multi-pass membrane protein</topology>
    </subcellularLocation>
</comment>
<comment type="tissue specificity">
    <text evidence="3 4">Predominantly expressed by leukocytes with cytotoxic activity such as CD8(+) T-cells and natural killer cells.</text>
</comment>
<comment type="induction">
    <text evidence="3">Up-regulated in CD4(+)T-cells in the liver and spleen upon infection with Leishmania donovani.</text>
</comment>
<comment type="disruption phenotype">
    <text evidence="3 4">Cytotoxic activity of natural killer cells and CD8(+) T-cells are defective in knockout mice (PubMed:32839608, PubMed:33911019). Mice fail to resolve Leishmania donovani infection, which is accompanied by a sustained reduction in the production of pro-inflammatory cytokines and a defective CD4(+) T-cell response (PubMed:32839608). Mice infected with Plasmodium berghei ANKA show a significant reduction in the recruitment of parasite-specific cytotoxic CD8(+) T cells to the brain, along with lower levels of inflammation (PubMed:32839608). Mice injected intravenously with B16F10 and LWT1 melanoma cell lines show a significant increase in the number of lung metastases compared with wild-type mice and an vitro impairment of natural killer cells to lyse susceptible tumor cells (PubMed:32839608).</text>
</comment>
<comment type="similarity">
    <text evidence="5">Belongs to the PMP-22/EMP/MP20 family.</text>
</comment>
<reference key="1">
    <citation type="journal article" date="2001" name="Mol. Vis.">
        <title>The mouse lens fiber-cell intrinsic membrane protein MP19 gene (Lim2) and granule membrane protein GMP-17 gene (Nkg7): isolation and sequence analysis of two neighboring genes.</title>
        <authorList>
            <person name="Zhou L."/>
            <person name="Li X.L."/>
            <person name="Church R.L."/>
        </authorList>
    </citation>
    <scope>NUCLEOTIDE SEQUENCE [GENOMIC DNA]</scope>
    <source>
        <strain>129/SvJ</strain>
    </source>
</reference>
<reference key="2">
    <citation type="journal article" date="2020" name="Nat. Immunol.">
        <title>The NK cell granule protein NKG7 regulates cytotoxic granule exocytosis and inflammation.</title>
        <authorList>
            <person name="Ng S.S."/>
            <person name="De Labastida Rivera F."/>
            <person name="Yan J."/>
            <person name="Corvino D."/>
            <person name="Das I."/>
            <person name="Zhang P."/>
            <person name="Kuns R."/>
            <person name="Chauhan S.B."/>
            <person name="Hou J."/>
            <person name="Li X.Y."/>
            <person name="Frame T.C.M."/>
            <person name="McEnroe B.A."/>
            <person name="Moore E."/>
            <person name="Na J."/>
            <person name="Engel J.A."/>
            <person name="Soon M.S.F."/>
            <person name="Singh B."/>
            <person name="Kueh A.J."/>
            <person name="Herold M.J."/>
            <person name="Montes de Oca M."/>
            <person name="Singh S.S."/>
            <person name="Bunn P.T."/>
            <person name="Aguilera A.R."/>
            <person name="Casey M."/>
            <person name="Braun M."/>
            <person name="Ghazanfari N."/>
            <person name="Wani S."/>
            <person name="Wang Y."/>
            <person name="Amante F.H."/>
            <person name="Edwards C.L."/>
            <person name="Haque A."/>
            <person name="Dougall W.C."/>
            <person name="Singh O.P."/>
            <person name="Baxter A.G."/>
            <person name="Teng M.W.L."/>
            <person name="Loukas A."/>
            <person name="Daly N.L."/>
            <person name="Cloonan N."/>
            <person name="Degli-Esposti M.A."/>
            <person name="Uzonna J."/>
            <person name="Heath W.R."/>
            <person name="Bald T."/>
            <person name="Tey S.K."/>
            <person name="Nakamura K."/>
            <person name="Hill G.R."/>
            <person name="Kumar R."/>
            <person name="Sundar S."/>
            <person name="Smyth M.J."/>
            <person name="Engwerda C.R."/>
        </authorList>
    </citation>
    <scope>FUNCTION</scope>
    <scope>DISRUPTION PHENOTYPE</scope>
    <scope>INDUCTION</scope>
    <scope>SUBCELLULAR LOCATION</scope>
    <scope>TISSUE SPECIFICITY</scope>
</reference>
<reference key="3">
    <citation type="journal article" date="2021" name="Immunohorizons">
        <title>Natural Killer Cell Group 7 Sequence in Cytotoxic Cells Optimizes Exocytosis of Lytic Granules Essential for the Perforin-Dependent, but Not Fas Ligand-Dependent, Cytolytic Pathway.</title>
        <authorList>
            <person name="Morikawa Y."/>
            <person name="Murakami M."/>
            <person name="Kondo H."/>
            <person name="Nemoto N."/>
            <person name="Iwabuchi K."/>
            <person name="Eshima K."/>
        </authorList>
    </citation>
    <scope>FUNCTION</scope>
    <scope>DISRUPTION PHENOTYPE</scope>
</reference>
<sequence>MEPCRSLALFAGSLGLTSSLIALTTDFWIVATGPHFSAHSGLWPTSQETQVAGYIHVTQSFCILAVLWGLVSVSFLILSCIPALSAPGRGPLVSTVMAFSAALSILVAMAVYTSMRWSQTPFSQVQTFFSWSFYLGWVSFILFLFAGCLSLGAHCRTRRAEYETL</sequence>
<feature type="chain" id="PRO_0000164668" description="Protein NKG7">
    <location>
        <begin position="1"/>
        <end position="165"/>
    </location>
</feature>
<feature type="transmembrane region" description="Helical" evidence="2">
    <location>
        <begin position="9"/>
        <end position="29"/>
    </location>
</feature>
<feature type="transmembrane region" description="Helical" evidence="2">
    <location>
        <begin position="61"/>
        <end position="81"/>
    </location>
</feature>
<feature type="transmembrane region" description="Helical" evidence="2">
    <location>
        <begin position="92"/>
        <end position="112"/>
    </location>
</feature>
<feature type="transmembrane region" description="Helical" evidence="2">
    <location>
        <begin position="133"/>
        <end position="153"/>
    </location>
</feature>
<keyword id="KW-1003">Cell membrane</keyword>
<keyword id="KW-0204">Cytolysis</keyword>
<keyword id="KW-0395">Inflammatory response</keyword>
<keyword id="KW-0458">Lysosome</keyword>
<keyword id="KW-0472">Membrane</keyword>
<keyword id="KW-1185">Reference proteome</keyword>
<keyword id="KW-0812">Transmembrane</keyword>
<keyword id="KW-1133">Transmembrane helix</keyword>
<evidence type="ECO:0000250" key="1">
    <source>
        <dbReference type="UniProtKB" id="Q16617"/>
    </source>
</evidence>
<evidence type="ECO:0000255" key="2"/>
<evidence type="ECO:0000269" key="3">
    <source>
    </source>
</evidence>
<evidence type="ECO:0000269" key="4">
    <source>
    </source>
</evidence>
<evidence type="ECO:0000305" key="5"/>
<evidence type="ECO:0000305" key="6">
    <source>
    </source>
</evidence>
<dbReference type="EMBL" id="AF320075">
    <property type="protein sequence ID" value="AAK08063.1"/>
    <property type="molecule type" value="Genomic_DNA"/>
</dbReference>
<dbReference type="CCDS" id="CCDS21169.1"/>
<dbReference type="SMR" id="Q99PA5"/>
<dbReference type="FunCoup" id="Q99PA5">
    <property type="interactions" value="69"/>
</dbReference>
<dbReference type="STRING" id="10090.ENSMUSP00000068946"/>
<dbReference type="iPTMnet" id="Q99PA5"/>
<dbReference type="PhosphoSitePlus" id="Q99PA5"/>
<dbReference type="PaxDb" id="10090-ENSMUSP00000068946"/>
<dbReference type="AGR" id="MGI:1931250"/>
<dbReference type="MGI" id="MGI:1931250">
    <property type="gene designation" value="Nkg7"/>
</dbReference>
<dbReference type="eggNOG" id="ENOG502SUH4">
    <property type="taxonomic scope" value="Eukaryota"/>
</dbReference>
<dbReference type="InParanoid" id="Q99PA5"/>
<dbReference type="PhylomeDB" id="Q99PA5"/>
<dbReference type="PRO" id="PR:Q99PA5"/>
<dbReference type="Proteomes" id="UP000000589">
    <property type="component" value="Unplaced"/>
</dbReference>
<dbReference type="RNAct" id="Q99PA5">
    <property type="molecule type" value="protein"/>
</dbReference>
<dbReference type="GO" id="GO:0044194">
    <property type="term" value="C:cytolytic granule"/>
    <property type="evidence" value="ECO:0000314"/>
    <property type="project" value="UniProtKB"/>
</dbReference>
<dbReference type="GO" id="GO:0101004">
    <property type="term" value="C:cytolytic granule membrane"/>
    <property type="evidence" value="ECO:0000250"/>
    <property type="project" value="UniProtKB"/>
</dbReference>
<dbReference type="GO" id="GO:0005886">
    <property type="term" value="C:plasma membrane"/>
    <property type="evidence" value="ECO:0000250"/>
    <property type="project" value="UniProtKB"/>
</dbReference>
<dbReference type="GO" id="GO:0035710">
    <property type="term" value="P:CD4-positive, alpha-beta T cell activation"/>
    <property type="evidence" value="ECO:0000315"/>
    <property type="project" value="UniProtKB"/>
</dbReference>
<dbReference type="GO" id="GO:0042832">
    <property type="term" value="P:defense response to protozoan"/>
    <property type="evidence" value="ECO:0000314"/>
    <property type="project" value="UniProtKB"/>
</dbReference>
<dbReference type="GO" id="GO:0140507">
    <property type="term" value="P:granzyme-mediated programmed cell death signaling pathway"/>
    <property type="evidence" value="ECO:0000315"/>
    <property type="project" value="UniProtKB"/>
</dbReference>
<dbReference type="GO" id="GO:0006954">
    <property type="term" value="P:inflammatory response"/>
    <property type="evidence" value="ECO:0007669"/>
    <property type="project" value="UniProtKB-KW"/>
</dbReference>
<dbReference type="GO" id="GO:0031640">
    <property type="term" value="P:killing of cells of another organism"/>
    <property type="evidence" value="ECO:0007669"/>
    <property type="project" value="UniProtKB-KW"/>
</dbReference>
<dbReference type="GO" id="GO:0043320">
    <property type="term" value="P:natural killer cell degranulation"/>
    <property type="evidence" value="ECO:0000315"/>
    <property type="project" value="UniProtKB"/>
</dbReference>
<dbReference type="GO" id="GO:0042267">
    <property type="term" value="P:natural killer cell mediated cytotoxicity"/>
    <property type="evidence" value="ECO:0000315"/>
    <property type="project" value="UniProtKB"/>
</dbReference>
<dbReference type="GO" id="GO:0002420">
    <property type="term" value="P:natural killer cell mediated cytotoxicity directed against tumor cell target"/>
    <property type="evidence" value="ECO:0000315"/>
    <property type="project" value="UniProtKB"/>
</dbReference>
<dbReference type="GO" id="GO:0050729">
    <property type="term" value="P:positive regulation of inflammatory response"/>
    <property type="evidence" value="ECO:0000315"/>
    <property type="project" value="UniProtKB"/>
</dbReference>
<dbReference type="FunFam" id="1.20.140.150:FF:000033">
    <property type="entry name" value="Natural killer cell granule protein 7"/>
    <property type="match status" value="1"/>
</dbReference>
<dbReference type="Gene3D" id="1.20.140.150">
    <property type="match status" value="1"/>
</dbReference>
<dbReference type="InterPro" id="IPR050579">
    <property type="entry name" value="PMP-22/EMP/MP20-like"/>
</dbReference>
<dbReference type="InterPro" id="IPR004031">
    <property type="entry name" value="PMP22/EMP/MP20/Claudin"/>
</dbReference>
<dbReference type="InterPro" id="IPR004032">
    <property type="entry name" value="PMP22_EMP_MP20"/>
</dbReference>
<dbReference type="PANTHER" id="PTHR10671">
    <property type="entry name" value="EPITHELIAL MEMBRANE PROTEIN-RELATED"/>
    <property type="match status" value="1"/>
</dbReference>
<dbReference type="PANTHER" id="PTHR10671:SF34">
    <property type="entry name" value="PROTEIN NKG7"/>
    <property type="match status" value="1"/>
</dbReference>
<dbReference type="Pfam" id="PF00822">
    <property type="entry name" value="PMP22_Claudin"/>
    <property type="match status" value="1"/>
</dbReference>
<dbReference type="PROSITE" id="PS01222">
    <property type="entry name" value="PMP22_2"/>
    <property type="match status" value="1"/>
</dbReference>